<comment type="function">
    <text evidence="2">Causes scratching in mice.</text>
</comment>
<comment type="subcellular location">
    <subcellularLocation>
        <location evidence="2">Secreted</location>
    </subcellularLocation>
</comment>
<comment type="tissue specificity">
    <text evidence="5">Expressed by the venom duct.</text>
</comment>
<comment type="domain">
    <text evidence="4">The cysteine framework is XIV (C-C-C-C).</text>
</comment>
<comment type="PTM">
    <text evidence="4">Contains 2 disulfide bonds.</text>
</comment>
<comment type="similarity">
    <text evidence="4">Belongs to the conotoxin J superfamily.</text>
</comment>
<organism>
    <name type="scientific">Conus geographus</name>
    <name type="common">Geography cone</name>
    <name type="synonym">Nubecula geographus</name>
    <dbReference type="NCBI Taxonomy" id="6491"/>
    <lineage>
        <taxon>Eukaryota</taxon>
        <taxon>Metazoa</taxon>
        <taxon>Spiralia</taxon>
        <taxon>Lophotrochozoa</taxon>
        <taxon>Mollusca</taxon>
        <taxon>Gastropoda</taxon>
        <taxon>Caenogastropoda</taxon>
        <taxon>Neogastropoda</taxon>
        <taxon>Conoidea</taxon>
        <taxon>Conidae</taxon>
        <taxon>Conus</taxon>
        <taxon>Gastridium</taxon>
    </lineage>
</organism>
<evidence type="ECO:0000255" key="1"/>
<evidence type="ECO:0000269" key="2">
    <source ref="2"/>
</evidence>
<evidence type="ECO:0000303" key="3">
    <source ref="2"/>
</evidence>
<evidence type="ECO:0000305" key="4"/>
<evidence type="ECO:0000305" key="5">
    <source ref="2"/>
</evidence>
<evidence type="ECO:0000312" key="6">
    <source>
        <dbReference type="EMBL" id="BAO65601.1"/>
    </source>
</evidence>
<accession>P58844</accession>
<accession>X5IGY4</accession>
<proteinExistence type="evidence at protein level"/>
<protein>
    <recommendedName>
        <fullName evidence="3">Scratcher peptide</fullName>
    </recommendedName>
</protein>
<feature type="signal peptide" evidence="1">
    <location>
        <begin position="1"/>
        <end position="24"/>
    </location>
</feature>
<feature type="propeptide" id="PRO_0000457999" evidence="4">
    <location>
        <begin position="25"/>
        <end position="38"/>
    </location>
</feature>
<feature type="peptide" id="PRO_0000044513" description="Scratcher peptide" evidence="2">
    <location>
        <begin position="39"/>
        <end position="67"/>
    </location>
</feature>
<feature type="propeptide" id="PRO_0000458000" evidence="4">
    <location>
        <begin position="68"/>
        <end position="85"/>
    </location>
</feature>
<feature type="modified residue" description="4-carboxyglutamate" evidence="2">
    <location>
        <position position="47"/>
    </location>
</feature>
<feature type="modified residue" description="Aspartic acid 1-amide" evidence="2">
    <location>
        <position position="67"/>
    </location>
</feature>
<sequence>MTSVQSVTCCCLLWLMLSVQPITPGSPGPAQLSRERSFKFLSGGFKEIVCHRYCAKGIAKEFCNCPDKRDVVSPRIRRRKRSKAM</sequence>
<name>CJST_CONGE</name>
<reference evidence="6" key="1">
    <citation type="journal article" date="2014" name="Nat. Commun.">
        <title>Evolution of separate predation- and defence-evoked venoms in carnivorous cone snails.</title>
        <authorList>
            <person name="Dutertre S."/>
            <person name="Jin A.-H."/>
            <person name="Vetter I."/>
            <person name="Hamilton B."/>
            <person name="Sunagar K."/>
            <person name="Lavergne V."/>
            <person name="Dutertre V."/>
            <person name="Fry B.G."/>
            <person name="Antunes A."/>
            <person name="Venter D.J."/>
            <person name="Alewood P.F."/>
            <person name="Lewis R.J."/>
        </authorList>
    </citation>
    <scope>NUCLEOTIDE SEQUENCE [MRNA]</scope>
    <source>
        <tissue>Venom duct</tissue>
    </source>
</reference>
<reference key="2">
    <citation type="book" date="1992" name="Toxins and targets">
        <title>Peptides in the venom of the geography cone, Conus geographus.</title>
        <editorList>
            <person name="Waters D."/>
            <person name="Lavin M."/>
            <person name="Maguire D."/>
            <person name="Pearn J."/>
        </editorList>
        <authorList>
            <person name="Olivera B.M."/>
            <person name="Johnson D.S."/>
            <person name="Azimi-Zonooz A."/>
            <person name="Cruz L.J."/>
        </authorList>
    </citation>
    <scope>PROTEIN SEQUENCE OF 39-67</scope>
    <scope>FUNCTION</scope>
    <scope>BIOASSAY</scope>
    <scope>GAMMA-CARBOXYGLUTAMATION AT GLU-47</scope>
    <scope>AMIDATION AT ASP-67</scope>
    <scope>SUBCELLULAR LOCATION</scope>
    <source>
        <tissue>Venom</tissue>
    </source>
</reference>
<keyword id="KW-0027">Amidation</keyword>
<keyword id="KW-0165">Cleavage on pair of basic residues</keyword>
<keyword id="KW-0903">Direct protein sequencing</keyword>
<keyword id="KW-1015">Disulfide bond</keyword>
<keyword id="KW-0301">Gamma-carboxyglutamic acid</keyword>
<keyword id="KW-0528">Neurotoxin</keyword>
<keyword id="KW-0964">Secreted</keyword>
<keyword id="KW-0732">Signal</keyword>
<keyword id="KW-0800">Toxin</keyword>
<dbReference type="EMBL" id="AB910833">
    <property type="protein sequence ID" value="BAO65601.1"/>
    <property type="molecule type" value="mRNA"/>
</dbReference>
<dbReference type="ConoServer" id="2482">
    <property type="toxin name" value="Scratcher peptide"/>
</dbReference>
<dbReference type="GO" id="GO:0005576">
    <property type="term" value="C:extracellular region"/>
    <property type="evidence" value="ECO:0007669"/>
    <property type="project" value="UniProtKB-SubCell"/>
</dbReference>
<dbReference type="GO" id="GO:0090729">
    <property type="term" value="F:toxin activity"/>
    <property type="evidence" value="ECO:0007669"/>
    <property type="project" value="UniProtKB-KW"/>
</dbReference>